<accession>Q96DN0</accession>
<proteinExistence type="evidence at protein level"/>
<name>ERP27_HUMAN</name>
<comment type="function">
    <text evidence="3 4">Specifically binds unfolded proteins and may recruit protein disulfide isomerase PDIA3 to unfolded substrates (PubMed:16940051, PubMed:23192347). Binds protein substrates via a hydrophobic pocket in the C-terminal domain (PubMed:16940051, PubMed:23192347). May play a role in the unfolded stress response (PubMed:23192347).</text>
</comment>
<comment type="subunit">
    <text evidence="3">Interacts with PDIA3.</text>
</comment>
<comment type="interaction">
    <interactant intactId="EBI-953772">
        <id>Q96DN0</id>
    </interactant>
    <interactant intactId="EBI-465872">
        <id>Q6QNY1</id>
        <label>BLOC1S2</label>
    </interactant>
    <organismsDiffer>false</organismsDiffer>
    <experiments>3</experiments>
</comment>
<comment type="interaction">
    <interactant intactId="EBI-953772">
        <id>Q96DN0</id>
    </interactant>
    <interactant intactId="EBI-10488839">
        <id>Q5U649</id>
        <label>C12orf60</label>
    </interactant>
    <organismsDiffer>false</organismsDiffer>
    <experiments>3</experiments>
</comment>
<comment type="interaction">
    <interactant intactId="EBI-953772">
        <id>Q96DN0</id>
    </interactant>
    <interactant intactId="EBI-358607">
        <id>P29692</id>
        <label>EEF1D</label>
    </interactant>
    <organismsDiffer>false</organismsDiffer>
    <experiments>5</experiments>
</comment>
<comment type="interaction">
    <interactant intactId="EBI-953772">
        <id>Q96DN0</id>
    </interactant>
    <interactant intactId="EBI-10181260">
        <id>Q08AF8</id>
        <label>GOLGA8G</label>
    </interactant>
    <organismsDiffer>false</organismsDiffer>
    <experiments>3</experiments>
</comment>
<comment type="interaction">
    <interactant intactId="EBI-953772">
        <id>Q96DN0</id>
    </interactant>
    <interactant intactId="EBI-466029">
        <id>P42858</id>
        <label>HTT</label>
    </interactant>
    <organismsDiffer>false</organismsDiffer>
    <experiments>3</experiments>
</comment>
<comment type="interaction">
    <interactant intactId="EBI-953772">
        <id>Q96DN0</id>
    </interactant>
    <interactant intactId="EBI-394644">
        <id>Q9H944</id>
        <label>MED20</label>
    </interactant>
    <organismsDiffer>false</organismsDiffer>
    <experiments>3</experiments>
</comment>
<comment type="interaction">
    <interactant intactId="EBI-953772">
        <id>Q96DN0</id>
    </interactant>
    <interactant intactId="EBI-347996">
        <id>O43765</id>
        <label>SGTA</label>
    </interactant>
    <organismsDiffer>false</organismsDiffer>
    <experiments>7</experiments>
</comment>
<comment type="interaction">
    <interactant intactId="EBI-953772">
        <id>Q96DN0</id>
    </interactant>
    <interactant intactId="EBI-356983">
        <id>P11441</id>
        <label>UBL4A</label>
    </interactant>
    <organismsDiffer>false</organismsDiffer>
    <experiments>3</experiments>
</comment>
<comment type="interaction">
    <interactant intactId="EBI-953772">
        <id>Q96DN0</id>
    </interactant>
    <interactant intactId="EBI-741480">
        <id>Q9UMX0</id>
        <label>UBQLN1</label>
    </interactant>
    <organismsDiffer>false</organismsDiffer>
    <experiments>4</experiments>
</comment>
<comment type="interaction">
    <interactant intactId="EBI-953772">
        <id>Q96DN0</id>
    </interactant>
    <interactant intactId="EBI-10173939">
        <id>Q9UMX0-2</id>
        <label>UBQLN1</label>
    </interactant>
    <organismsDiffer>false</organismsDiffer>
    <experiments>3</experiments>
</comment>
<comment type="interaction">
    <interactant intactId="EBI-953772">
        <id>Q96DN0</id>
    </interactant>
    <interactant intactId="EBI-947187">
        <id>Q9UHD9</id>
        <label>UBQLN2</label>
    </interactant>
    <organismsDiffer>false</organismsDiffer>
    <experiments>3</experiments>
</comment>
<comment type="subcellular location">
    <subcellularLocation>
        <location evidence="3">Endoplasmic reticulum lumen</location>
    </subcellularLocation>
</comment>
<comment type="induction">
    <text evidence="4">Induced by ER stress.</text>
</comment>
<comment type="similarity">
    <text evidence="5">Belongs to the protein disulfide isomerase family.</text>
</comment>
<comment type="caution">
    <text evidence="5">Does not contain a CXXC active site motif indicating that it is a catalytically redox-inactive member of the protein disulfide isomerase family.</text>
</comment>
<feature type="signal peptide" evidence="1">
    <location>
        <begin position="1"/>
        <end position="25"/>
    </location>
</feature>
<feature type="chain" id="PRO_0000281118" description="Endoplasmic reticulum resident protein 27">
    <location>
        <begin position="26"/>
        <end position="273"/>
    </location>
</feature>
<feature type="domain" description="Thioredoxin" evidence="5">
    <location>
        <begin position="39"/>
        <end position="152"/>
    </location>
</feature>
<feature type="region of interest" description="PDIA3-binding site" evidence="3">
    <location>
        <begin position="230"/>
        <end position="233"/>
    </location>
</feature>
<feature type="short sequence motif" description="Prevents secretion from ER" evidence="6">
    <location>
        <begin position="270"/>
        <end position="273"/>
    </location>
</feature>
<feature type="glycosylation site" description="N-linked (GlcNAc...) asparagine" evidence="2">
    <location>
        <position position="100"/>
    </location>
</feature>
<feature type="sequence variant" id="VAR_052582" description="In dbSNP:rs35030722.">
    <original>F</original>
    <variation>L</variation>
    <location>
        <position position="52"/>
    </location>
</feature>
<feature type="mutagenesis site" description="Decreases somatostatin-14 binding." evidence="3">
    <original>M</original>
    <variation>W</variation>
    <location>
        <position position="168"/>
    </location>
</feature>
<feature type="mutagenesis site" description="Decreases somatostatin-14 binding." evidence="3">
    <original>I</original>
    <variation>A</variation>
    <variation>L</variation>
    <variation>W</variation>
    <location>
        <position position="196"/>
    </location>
</feature>
<feature type="mutagenesis site" description="Conserved PDIA3 binding in vivo and in vitro." evidence="3">
    <original>I</original>
    <variation>W</variation>
    <location>
        <position position="196"/>
    </location>
</feature>
<feature type="mutagenesis site" description="Greatly reduces PDIA3 binding in vivo and in vitro." evidence="3">
    <original>E</original>
    <variation>K</variation>
    <variation>A</variation>
    <location>
        <position position="231"/>
    </location>
</feature>
<feature type="mutagenesis site" description="Greatly reduces PDIA3 binding in vivo and in vitro." evidence="3">
    <original>W</original>
    <variation>A</variation>
    <location>
        <position position="232"/>
    </location>
</feature>
<feature type="mutagenesis site" description="Greatly reduces PDIA3 binding in vivo and in vitro." evidence="3">
    <original>D</original>
    <variation>G</variation>
    <location>
        <position position="233"/>
    </location>
</feature>
<feature type="helix" evidence="8">
    <location>
        <begin position="46"/>
        <end position="54"/>
    </location>
</feature>
<feature type="strand" evidence="8">
    <location>
        <begin position="56"/>
        <end position="63"/>
    </location>
</feature>
<feature type="helix" evidence="8">
    <location>
        <begin position="71"/>
        <end position="78"/>
    </location>
</feature>
<feature type="turn" evidence="8">
    <location>
        <begin position="79"/>
        <end position="81"/>
    </location>
</feature>
<feature type="strand" evidence="8">
    <location>
        <begin position="85"/>
        <end position="90"/>
    </location>
</feature>
<feature type="helix" evidence="8">
    <location>
        <begin position="93"/>
        <end position="98"/>
    </location>
</feature>
<feature type="strand" evidence="8">
    <location>
        <begin position="103"/>
        <end position="110"/>
    </location>
</feature>
<feature type="turn" evidence="8">
    <location>
        <begin position="111"/>
        <end position="114"/>
    </location>
</feature>
<feature type="strand" evidence="8">
    <location>
        <begin position="115"/>
        <end position="119"/>
    </location>
</feature>
<feature type="helix" evidence="8">
    <location>
        <begin position="121"/>
        <end position="125"/>
    </location>
</feature>
<feature type="helix" evidence="8">
    <location>
        <begin position="129"/>
        <end position="139"/>
    </location>
</feature>
<feature type="strand" evidence="8">
    <location>
        <begin position="143"/>
        <end position="146"/>
    </location>
</feature>
<feature type="helix" evidence="8">
    <location>
        <begin position="149"/>
        <end position="157"/>
    </location>
</feature>
<feature type="strand" evidence="8">
    <location>
        <begin position="162"/>
        <end position="168"/>
    </location>
</feature>
<feature type="helix" evidence="8">
    <location>
        <begin position="175"/>
        <end position="188"/>
    </location>
</feature>
<feature type="turn" evidence="8">
    <location>
        <begin position="189"/>
        <end position="192"/>
    </location>
</feature>
<feature type="strand" evidence="8">
    <location>
        <begin position="194"/>
        <end position="199"/>
    </location>
</feature>
<feature type="helix" evidence="8">
    <location>
        <begin position="203"/>
        <end position="205"/>
    </location>
</feature>
<feature type="helix" evidence="8">
    <location>
        <begin position="206"/>
        <end position="211"/>
    </location>
</feature>
<feature type="helix" evidence="8">
    <location>
        <begin position="216"/>
        <end position="218"/>
    </location>
</feature>
<feature type="strand" evidence="8">
    <location>
        <begin position="220"/>
        <end position="229"/>
    </location>
</feature>
<feature type="strand" evidence="8">
    <location>
        <begin position="232"/>
        <end position="235"/>
    </location>
</feature>
<feature type="helix" evidence="8">
    <location>
        <begin position="242"/>
        <end position="253"/>
    </location>
</feature>
<reference key="1">
    <citation type="journal article" date="2003" name="Genome Res.">
        <title>The secreted protein discovery initiative (SPDI), a large-scale effort to identify novel human secreted and transmembrane proteins: a bioinformatics assessment.</title>
        <authorList>
            <person name="Clark H.F."/>
            <person name="Gurney A.L."/>
            <person name="Abaya E."/>
            <person name="Baker K."/>
            <person name="Baldwin D.T."/>
            <person name="Brush J."/>
            <person name="Chen J."/>
            <person name="Chow B."/>
            <person name="Chui C."/>
            <person name="Crowley C."/>
            <person name="Currell B."/>
            <person name="Deuel B."/>
            <person name="Dowd P."/>
            <person name="Eaton D."/>
            <person name="Foster J.S."/>
            <person name="Grimaldi C."/>
            <person name="Gu Q."/>
            <person name="Hass P.E."/>
            <person name="Heldens S."/>
            <person name="Huang A."/>
            <person name="Kim H.S."/>
            <person name="Klimowski L."/>
            <person name="Jin Y."/>
            <person name="Johnson S."/>
            <person name="Lee J."/>
            <person name="Lewis L."/>
            <person name="Liao D."/>
            <person name="Mark M.R."/>
            <person name="Robbie E."/>
            <person name="Sanchez C."/>
            <person name="Schoenfeld J."/>
            <person name="Seshagiri S."/>
            <person name="Simmons L."/>
            <person name="Singh J."/>
            <person name="Smith V."/>
            <person name="Stinson J."/>
            <person name="Vagts A."/>
            <person name="Vandlen R.L."/>
            <person name="Watanabe C."/>
            <person name="Wieand D."/>
            <person name="Woods K."/>
            <person name="Xie M.-H."/>
            <person name="Yansura D.G."/>
            <person name="Yi S."/>
            <person name="Yu G."/>
            <person name="Yuan J."/>
            <person name="Zhang M."/>
            <person name="Zhang Z."/>
            <person name="Goddard A.D."/>
            <person name="Wood W.I."/>
            <person name="Godowski P.J."/>
            <person name="Gray A.M."/>
        </authorList>
    </citation>
    <scope>NUCLEOTIDE SEQUENCE [LARGE SCALE MRNA]</scope>
</reference>
<reference key="2">
    <citation type="journal article" date="2004" name="Nat. Genet.">
        <title>Complete sequencing and characterization of 21,243 full-length human cDNAs.</title>
        <authorList>
            <person name="Ota T."/>
            <person name="Suzuki Y."/>
            <person name="Nishikawa T."/>
            <person name="Otsuki T."/>
            <person name="Sugiyama T."/>
            <person name="Irie R."/>
            <person name="Wakamatsu A."/>
            <person name="Hayashi K."/>
            <person name="Sato H."/>
            <person name="Nagai K."/>
            <person name="Kimura K."/>
            <person name="Makita H."/>
            <person name="Sekine M."/>
            <person name="Obayashi M."/>
            <person name="Nishi T."/>
            <person name="Shibahara T."/>
            <person name="Tanaka T."/>
            <person name="Ishii S."/>
            <person name="Yamamoto J."/>
            <person name="Saito K."/>
            <person name="Kawai Y."/>
            <person name="Isono Y."/>
            <person name="Nakamura Y."/>
            <person name="Nagahari K."/>
            <person name="Murakami K."/>
            <person name="Yasuda T."/>
            <person name="Iwayanagi T."/>
            <person name="Wagatsuma M."/>
            <person name="Shiratori A."/>
            <person name="Sudo H."/>
            <person name="Hosoiri T."/>
            <person name="Kaku Y."/>
            <person name="Kodaira H."/>
            <person name="Kondo H."/>
            <person name="Sugawara M."/>
            <person name="Takahashi M."/>
            <person name="Kanda K."/>
            <person name="Yokoi T."/>
            <person name="Furuya T."/>
            <person name="Kikkawa E."/>
            <person name="Omura Y."/>
            <person name="Abe K."/>
            <person name="Kamihara K."/>
            <person name="Katsuta N."/>
            <person name="Sato K."/>
            <person name="Tanikawa M."/>
            <person name="Yamazaki M."/>
            <person name="Ninomiya K."/>
            <person name="Ishibashi T."/>
            <person name="Yamashita H."/>
            <person name="Murakawa K."/>
            <person name="Fujimori K."/>
            <person name="Tanai H."/>
            <person name="Kimata M."/>
            <person name="Watanabe M."/>
            <person name="Hiraoka S."/>
            <person name="Chiba Y."/>
            <person name="Ishida S."/>
            <person name="Ono Y."/>
            <person name="Takiguchi S."/>
            <person name="Watanabe S."/>
            <person name="Yosida M."/>
            <person name="Hotuta T."/>
            <person name="Kusano J."/>
            <person name="Kanehori K."/>
            <person name="Takahashi-Fujii A."/>
            <person name="Hara H."/>
            <person name="Tanase T.-O."/>
            <person name="Nomura Y."/>
            <person name="Togiya S."/>
            <person name="Komai F."/>
            <person name="Hara R."/>
            <person name="Takeuchi K."/>
            <person name="Arita M."/>
            <person name="Imose N."/>
            <person name="Musashino K."/>
            <person name="Yuuki H."/>
            <person name="Oshima A."/>
            <person name="Sasaki N."/>
            <person name="Aotsuka S."/>
            <person name="Yoshikawa Y."/>
            <person name="Matsunawa H."/>
            <person name="Ichihara T."/>
            <person name="Shiohata N."/>
            <person name="Sano S."/>
            <person name="Moriya S."/>
            <person name="Momiyama H."/>
            <person name="Satoh N."/>
            <person name="Takami S."/>
            <person name="Terashima Y."/>
            <person name="Suzuki O."/>
            <person name="Nakagawa S."/>
            <person name="Senoh A."/>
            <person name="Mizoguchi H."/>
            <person name="Goto Y."/>
            <person name="Shimizu F."/>
            <person name="Wakebe H."/>
            <person name="Hishigaki H."/>
            <person name="Watanabe T."/>
            <person name="Sugiyama A."/>
            <person name="Takemoto M."/>
            <person name="Kawakami B."/>
            <person name="Yamazaki M."/>
            <person name="Watanabe K."/>
            <person name="Kumagai A."/>
            <person name="Itakura S."/>
            <person name="Fukuzumi Y."/>
            <person name="Fujimori Y."/>
            <person name="Komiyama M."/>
            <person name="Tashiro H."/>
            <person name="Tanigami A."/>
            <person name="Fujiwara T."/>
            <person name="Ono T."/>
            <person name="Yamada K."/>
            <person name="Fujii Y."/>
            <person name="Ozaki K."/>
            <person name="Hirao M."/>
            <person name="Ohmori Y."/>
            <person name="Kawabata A."/>
            <person name="Hikiji T."/>
            <person name="Kobatake N."/>
            <person name="Inagaki H."/>
            <person name="Ikema Y."/>
            <person name="Okamoto S."/>
            <person name="Okitani R."/>
            <person name="Kawakami T."/>
            <person name="Noguchi S."/>
            <person name="Itoh T."/>
            <person name="Shigeta K."/>
            <person name="Senba T."/>
            <person name="Matsumura K."/>
            <person name="Nakajima Y."/>
            <person name="Mizuno T."/>
            <person name="Morinaga M."/>
            <person name="Sasaki M."/>
            <person name="Togashi T."/>
            <person name="Oyama M."/>
            <person name="Hata H."/>
            <person name="Watanabe M."/>
            <person name="Komatsu T."/>
            <person name="Mizushima-Sugano J."/>
            <person name="Satoh T."/>
            <person name="Shirai Y."/>
            <person name="Takahashi Y."/>
            <person name="Nakagawa K."/>
            <person name="Okumura K."/>
            <person name="Nagase T."/>
            <person name="Nomura N."/>
            <person name="Kikuchi H."/>
            <person name="Masuho Y."/>
            <person name="Yamashita R."/>
            <person name="Nakai K."/>
            <person name="Yada T."/>
            <person name="Nakamura Y."/>
            <person name="Ohara O."/>
            <person name="Isogai T."/>
            <person name="Sugano S."/>
        </authorList>
    </citation>
    <scope>NUCLEOTIDE SEQUENCE [LARGE SCALE MRNA]</scope>
    <source>
        <tissue>Pancreas</tissue>
    </source>
</reference>
<reference key="3">
    <citation type="journal article" date="2004" name="Genome Res.">
        <title>The status, quality, and expansion of the NIH full-length cDNA project: the Mammalian Gene Collection (MGC).</title>
        <authorList>
            <consortium name="The MGC Project Team"/>
        </authorList>
    </citation>
    <scope>NUCLEOTIDE SEQUENCE [LARGE SCALE MRNA]</scope>
    <source>
        <tissue>Lung</tissue>
    </source>
</reference>
<reference key="4">
    <citation type="journal article" date="2006" name="J. Biol. Chem.">
        <title>ERp27, a new non-catalytic endoplasmic reticulum-located human protein disulfide isomerase family member, interacts with ERp57.</title>
        <authorList>
            <person name="Alanen H.I."/>
            <person name="Williamson R.A."/>
            <person name="Howard M.J."/>
            <person name="Hatahet F.S."/>
            <person name="Salo K.E.H."/>
            <person name="Kauppila A."/>
            <person name="Kellokumpu S."/>
            <person name="Ruddock L.W."/>
        </authorList>
    </citation>
    <scope>STRUCTURE BY NMR OF 26-141</scope>
    <scope>FUNCTION</scope>
    <scope>SUBCELLULAR LOCATION</scope>
    <scope>INTERACTION WITH PDIA3</scope>
    <scope>MUTAGENESIS OF MET-168; ILE-196; GLU-231; TRP-232 AND ASP-233</scope>
</reference>
<reference evidence="7" key="5">
    <citation type="journal article" date="2013" name="J. Biol. Chem.">
        <title>The crystal structure of the protein-disulfide isomerase family member ERp27 provides insights into its substrate binding capabilities.</title>
        <authorList>
            <person name="Kober F.X."/>
            <person name="Koelmel W."/>
            <person name="Kuper J."/>
            <person name="Drechsler J."/>
            <person name="Mais C."/>
            <person name="Hermanns H.M."/>
            <person name="Schindelin H."/>
        </authorList>
    </citation>
    <scope>X-RAY CRYSTALLOGRAPHY (2.20 ANGSTROMS) OF 30-256</scope>
    <scope>FUNCTION</scope>
    <scope>INDUCTION</scope>
</reference>
<sequence length="273" mass="30480">MEAAPSRFMFLLFLLTCELAAEVAAEVEKSSDGPGAAQEPTWLTDVPAAMEFIAATEVAVIGFFQDLEIPAVPILHSMVQKFPGVSFGISTDSEVLTHYNITGNTICLFRLVDNEQLNLEDEDIESIDATKLSRFIEINSLHMVTEYNPVTVIGLFNSVIQIHLLLIMNKASPEYEENMHRYQKAAKLFQGKILFILVDSGMKENGKVISFFKLKESQLPALAIYQTLDDEWDTLPTAEVSVEHVQNFCDGFLSGKLLKENRESEGKTPKVEL</sequence>
<keyword id="KW-0002">3D-structure</keyword>
<keyword id="KW-0256">Endoplasmic reticulum</keyword>
<keyword id="KW-0325">Glycoprotein</keyword>
<keyword id="KW-1267">Proteomics identification</keyword>
<keyword id="KW-1185">Reference proteome</keyword>
<keyword id="KW-0732">Signal</keyword>
<keyword id="KW-0834">Unfolded protein response</keyword>
<organism>
    <name type="scientific">Homo sapiens</name>
    <name type="common">Human</name>
    <dbReference type="NCBI Taxonomy" id="9606"/>
    <lineage>
        <taxon>Eukaryota</taxon>
        <taxon>Metazoa</taxon>
        <taxon>Chordata</taxon>
        <taxon>Craniata</taxon>
        <taxon>Vertebrata</taxon>
        <taxon>Euteleostomi</taxon>
        <taxon>Mammalia</taxon>
        <taxon>Eutheria</taxon>
        <taxon>Euarchontoglires</taxon>
        <taxon>Primates</taxon>
        <taxon>Haplorrhini</taxon>
        <taxon>Catarrhini</taxon>
        <taxon>Hominidae</taxon>
        <taxon>Homo</taxon>
    </lineage>
</organism>
<gene>
    <name type="primary">ERP27</name>
    <name type="synonym">C12orf46</name>
    <name type="ORF">UNQ781/PRO1575</name>
</gene>
<evidence type="ECO:0000255" key="1"/>
<evidence type="ECO:0000255" key="2">
    <source>
        <dbReference type="PROSITE-ProRule" id="PRU00498"/>
    </source>
</evidence>
<evidence type="ECO:0000269" key="3">
    <source>
    </source>
</evidence>
<evidence type="ECO:0000269" key="4">
    <source>
    </source>
</evidence>
<evidence type="ECO:0000305" key="5"/>
<evidence type="ECO:0000305" key="6">
    <source>
    </source>
</evidence>
<evidence type="ECO:0007744" key="7">
    <source>
        <dbReference type="PDB" id="4F9Z"/>
    </source>
</evidence>
<evidence type="ECO:0007829" key="8">
    <source>
        <dbReference type="PDB" id="4F9Z"/>
    </source>
</evidence>
<protein>
    <recommendedName>
        <fullName>Endoplasmic reticulum resident protein 27</fullName>
        <shortName>ER protein 27</shortName>
        <shortName>ERp27</shortName>
    </recommendedName>
    <alternativeName>
        <fullName evidence="5">Inactive protein disulfide-isomerase 27</fullName>
    </alternativeName>
</protein>
<dbReference type="EMBL" id="AY358536">
    <property type="protein sequence ID" value="AAQ88900.1"/>
    <property type="molecule type" value="mRNA"/>
</dbReference>
<dbReference type="EMBL" id="AK056677">
    <property type="protein sequence ID" value="BAB71251.1"/>
    <property type="molecule type" value="mRNA"/>
</dbReference>
<dbReference type="EMBL" id="BC030218">
    <property type="protein sequence ID" value="AAH30218.1"/>
    <property type="molecule type" value="mRNA"/>
</dbReference>
<dbReference type="CCDS" id="CCDS8670.1"/>
<dbReference type="RefSeq" id="NP_001287713.1">
    <property type="nucleotide sequence ID" value="NM_001300784.1"/>
</dbReference>
<dbReference type="RefSeq" id="NP_689534.1">
    <property type="nucleotide sequence ID" value="NM_152321.4"/>
</dbReference>
<dbReference type="PDB" id="2L4C">
    <property type="method" value="NMR"/>
    <property type="chains" value="A=26-141"/>
</dbReference>
<dbReference type="PDB" id="4F9Z">
    <property type="method" value="X-ray"/>
    <property type="resolution" value="2.20 A"/>
    <property type="chains" value="A/B/C/D/E=30-256"/>
</dbReference>
<dbReference type="PDBsum" id="2L4C"/>
<dbReference type="PDBsum" id="4F9Z"/>
<dbReference type="SMR" id="Q96DN0"/>
<dbReference type="BioGRID" id="125733">
    <property type="interactions" value="30"/>
</dbReference>
<dbReference type="FunCoup" id="Q96DN0">
    <property type="interactions" value="219"/>
</dbReference>
<dbReference type="IntAct" id="Q96DN0">
    <property type="interactions" value="31"/>
</dbReference>
<dbReference type="MINT" id="Q96DN0"/>
<dbReference type="STRING" id="9606.ENSP00000266397"/>
<dbReference type="GlyCosmos" id="Q96DN0">
    <property type="glycosylation" value="1 site, No reported glycans"/>
</dbReference>
<dbReference type="GlyGen" id="Q96DN0">
    <property type="glycosylation" value="1 site"/>
</dbReference>
<dbReference type="BioMuta" id="ERP27"/>
<dbReference type="DMDM" id="74731474"/>
<dbReference type="jPOST" id="Q96DN0"/>
<dbReference type="MassIVE" id="Q96DN0"/>
<dbReference type="PaxDb" id="9606-ENSP00000266397"/>
<dbReference type="PeptideAtlas" id="Q96DN0"/>
<dbReference type="ProteomicsDB" id="76296"/>
<dbReference type="Antibodypedia" id="23696">
    <property type="antibodies" value="100 antibodies from 20 providers"/>
</dbReference>
<dbReference type="DNASU" id="121506"/>
<dbReference type="Ensembl" id="ENST00000266397.7">
    <property type="protein sequence ID" value="ENSP00000266397.2"/>
    <property type="gene ID" value="ENSG00000139055.7"/>
</dbReference>
<dbReference type="GeneID" id="121506"/>
<dbReference type="KEGG" id="hsa:121506"/>
<dbReference type="MANE-Select" id="ENST00000266397.7">
    <property type="protein sequence ID" value="ENSP00000266397.2"/>
    <property type="RefSeq nucleotide sequence ID" value="NM_152321.4"/>
    <property type="RefSeq protein sequence ID" value="NP_689534.1"/>
</dbReference>
<dbReference type="UCSC" id="uc001rco.4">
    <property type="organism name" value="human"/>
</dbReference>
<dbReference type="AGR" id="HGNC:26495"/>
<dbReference type="CTD" id="121506"/>
<dbReference type="DisGeNET" id="121506"/>
<dbReference type="GeneCards" id="ERP27"/>
<dbReference type="HGNC" id="HGNC:26495">
    <property type="gene designation" value="ERP27"/>
</dbReference>
<dbReference type="HPA" id="ENSG00000139055">
    <property type="expression patterns" value="Tissue enriched (pancreas)"/>
</dbReference>
<dbReference type="MIM" id="610642">
    <property type="type" value="gene"/>
</dbReference>
<dbReference type="neXtProt" id="NX_Q96DN0"/>
<dbReference type="OpenTargets" id="ENSG00000139055"/>
<dbReference type="PharmGKB" id="PA162385401"/>
<dbReference type="VEuPathDB" id="HostDB:ENSG00000139055"/>
<dbReference type="eggNOG" id="KOG0191">
    <property type="taxonomic scope" value="Eukaryota"/>
</dbReference>
<dbReference type="GeneTree" id="ENSGT00930000151058"/>
<dbReference type="HOGENOM" id="CLU_088451_0_0_1"/>
<dbReference type="InParanoid" id="Q96DN0"/>
<dbReference type="OMA" id="EESHGYK"/>
<dbReference type="OrthoDB" id="8667660at2759"/>
<dbReference type="PAN-GO" id="Q96DN0">
    <property type="GO annotations" value="3 GO annotations based on evolutionary models"/>
</dbReference>
<dbReference type="PhylomeDB" id="Q96DN0"/>
<dbReference type="TreeFam" id="TF106381"/>
<dbReference type="BRENDA" id="5.3.4.1">
    <property type="organism ID" value="2681"/>
</dbReference>
<dbReference type="PathwayCommons" id="Q96DN0"/>
<dbReference type="SignaLink" id="Q96DN0"/>
<dbReference type="BioGRID-ORCS" id="121506">
    <property type="hits" value="15 hits in 1155 CRISPR screens"/>
</dbReference>
<dbReference type="ChiTaRS" id="ERP27">
    <property type="organism name" value="human"/>
</dbReference>
<dbReference type="EvolutionaryTrace" id="Q96DN0"/>
<dbReference type="GenomeRNAi" id="121506"/>
<dbReference type="Pharos" id="Q96DN0">
    <property type="development level" value="Tbio"/>
</dbReference>
<dbReference type="PRO" id="PR:Q96DN0"/>
<dbReference type="Proteomes" id="UP000005640">
    <property type="component" value="Chromosome 12"/>
</dbReference>
<dbReference type="RNAct" id="Q96DN0">
    <property type="molecule type" value="protein"/>
</dbReference>
<dbReference type="Bgee" id="ENSG00000139055">
    <property type="expression patterns" value="Expressed in body of pancreas and 122 other cell types or tissues"/>
</dbReference>
<dbReference type="ExpressionAtlas" id="Q96DN0">
    <property type="expression patterns" value="baseline and differential"/>
</dbReference>
<dbReference type="GO" id="GO:0005783">
    <property type="term" value="C:endoplasmic reticulum"/>
    <property type="evidence" value="ECO:0000318"/>
    <property type="project" value="GO_Central"/>
</dbReference>
<dbReference type="GO" id="GO:0005788">
    <property type="term" value="C:endoplasmic reticulum lumen"/>
    <property type="evidence" value="ECO:0007669"/>
    <property type="project" value="UniProtKB-SubCell"/>
</dbReference>
<dbReference type="GO" id="GO:0006457">
    <property type="term" value="P:protein folding"/>
    <property type="evidence" value="ECO:0000318"/>
    <property type="project" value="GO_Central"/>
</dbReference>
<dbReference type="GO" id="GO:0034976">
    <property type="term" value="P:response to endoplasmic reticulum stress"/>
    <property type="evidence" value="ECO:0000318"/>
    <property type="project" value="GO_Central"/>
</dbReference>
<dbReference type="GO" id="GO:0006986">
    <property type="term" value="P:response to unfolded protein"/>
    <property type="evidence" value="ECO:0007669"/>
    <property type="project" value="UniProtKB-KW"/>
</dbReference>
<dbReference type="CDD" id="cd02982">
    <property type="entry name" value="PDI_b'_family"/>
    <property type="match status" value="1"/>
</dbReference>
<dbReference type="CDD" id="cd02981">
    <property type="entry name" value="PDI_b_family"/>
    <property type="match status" value="1"/>
</dbReference>
<dbReference type="FunFam" id="3.40.30.10:FF:000212">
    <property type="entry name" value="Endoplasmic reticulum resident protein 27"/>
    <property type="match status" value="1"/>
</dbReference>
<dbReference type="FunFam" id="3.40.30.10:FF:000232">
    <property type="entry name" value="Endoplasmic reticulum resident protein 27"/>
    <property type="match status" value="1"/>
</dbReference>
<dbReference type="Gene3D" id="3.40.30.10">
    <property type="entry name" value="Glutaredoxin"/>
    <property type="match status" value="2"/>
</dbReference>
<dbReference type="InterPro" id="IPR036249">
    <property type="entry name" value="Thioredoxin-like_sf"/>
</dbReference>
<dbReference type="PANTHER" id="PTHR18929:SF193">
    <property type="entry name" value="ENDOPLASMIC RETICULUM RESIDENT PROTEIN 27"/>
    <property type="match status" value="1"/>
</dbReference>
<dbReference type="PANTHER" id="PTHR18929">
    <property type="entry name" value="PROTEIN DISULFIDE ISOMERASE"/>
    <property type="match status" value="1"/>
</dbReference>
<dbReference type="Pfam" id="PF13848">
    <property type="entry name" value="Thioredoxin_6"/>
    <property type="match status" value="1"/>
</dbReference>
<dbReference type="SUPFAM" id="SSF52833">
    <property type="entry name" value="Thioredoxin-like"/>
    <property type="match status" value="2"/>
</dbReference>